<keyword id="KW-0007">Acetylation</keyword>
<keyword id="KW-0479">Metal-binding</keyword>
<keyword id="KW-0539">Nucleus</keyword>
<keyword id="KW-1185">Reference proteome</keyword>
<keyword id="KW-0819">tRNA processing</keyword>
<keyword id="KW-0862">Zinc</keyword>
<feature type="initiator methionine" description="Removed" evidence="2">
    <location>
        <position position="1"/>
    </location>
</feature>
<feature type="chain" id="PRO_0000236682" description="Ribonuclease P protein subunit p21">
    <location>
        <begin position="2"/>
        <end position="154"/>
    </location>
</feature>
<feature type="region of interest" description="Disordered" evidence="3">
    <location>
        <begin position="112"/>
        <end position="154"/>
    </location>
</feature>
<feature type="compositionally biased region" description="Basic and acidic residues" evidence="3">
    <location>
        <begin position="137"/>
        <end position="146"/>
    </location>
</feature>
<feature type="binding site" evidence="1">
    <location>
        <position position="62"/>
    </location>
    <ligand>
        <name>Zn(2+)</name>
        <dbReference type="ChEBI" id="CHEBI:29105"/>
    </ligand>
</feature>
<feature type="binding site" evidence="1">
    <location>
        <position position="65"/>
    </location>
    <ligand>
        <name>Zn(2+)</name>
        <dbReference type="ChEBI" id="CHEBI:29105"/>
    </ligand>
</feature>
<feature type="binding site" evidence="1">
    <location>
        <position position="92"/>
    </location>
    <ligand>
        <name>Zn(2+)</name>
        <dbReference type="ChEBI" id="CHEBI:29105"/>
    </ligand>
</feature>
<feature type="binding site" evidence="1">
    <location>
        <position position="95"/>
    </location>
    <ligand>
        <name>Zn(2+)</name>
        <dbReference type="ChEBI" id="CHEBI:29105"/>
    </ligand>
</feature>
<feature type="modified residue" description="N-acetylalanine" evidence="2">
    <location>
        <position position="2"/>
    </location>
</feature>
<organism>
    <name type="scientific">Macaca mulatta</name>
    <name type="common">Rhesus macaque</name>
    <dbReference type="NCBI Taxonomy" id="9544"/>
    <lineage>
        <taxon>Eukaryota</taxon>
        <taxon>Metazoa</taxon>
        <taxon>Chordata</taxon>
        <taxon>Craniata</taxon>
        <taxon>Vertebrata</taxon>
        <taxon>Euteleostomi</taxon>
        <taxon>Mammalia</taxon>
        <taxon>Eutheria</taxon>
        <taxon>Euarchontoglires</taxon>
        <taxon>Primates</taxon>
        <taxon>Haplorrhini</taxon>
        <taxon>Catarrhini</taxon>
        <taxon>Cercopithecidae</taxon>
        <taxon>Cercopithecinae</taxon>
        <taxon>Macaca</taxon>
    </lineage>
</organism>
<proteinExistence type="inferred from homology"/>
<dbReference type="EMBL" id="AB128049">
    <property type="protein sequence ID" value="BAD69769.1"/>
    <property type="molecule type" value="Genomic_DNA"/>
</dbReference>
<dbReference type="RefSeq" id="NP_001040603.1">
    <property type="nucleotide sequence ID" value="NM_001047138.1"/>
</dbReference>
<dbReference type="SMR" id="Q5TM57"/>
<dbReference type="FunCoup" id="Q5TM57">
    <property type="interactions" value="26"/>
</dbReference>
<dbReference type="GeneID" id="713056"/>
<dbReference type="KEGG" id="mcc:713056"/>
<dbReference type="CTD" id="79897"/>
<dbReference type="InParanoid" id="Q5TM57"/>
<dbReference type="OrthoDB" id="128536at2759"/>
<dbReference type="Proteomes" id="UP000006718">
    <property type="component" value="Unassembled WGS sequence"/>
</dbReference>
<dbReference type="GO" id="GO:0005655">
    <property type="term" value="C:nucleolar ribonuclease P complex"/>
    <property type="evidence" value="ECO:0000318"/>
    <property type="project" value="GO_Central"/>
</dbReference>
<dbReference type="GO" id="GO:0046872">
    <property type="term" value="F:metal ion binding"/>
    <property type="evidence" value="ECO:0007669"/>
    <property type="project" value="UniProtKB-KW"/>
</dbReference>
<dbReference type="GO" id="GO:0004526">
    <property type="term" value="F:ribonuclease P activity"/>
    <property type="evidence" value="ECO:0007669"/>
    <property type="project" value="UniProtKB-EC"/>
</dbReference>
<dbReference type="GO" id="GO:0008033">
    <property type="term" value="P:tRNA processing"/>
    <property type="evidence" value="ECO:0000318"/>
    <property type="project" value="GO_Central"/>
</dbReference>
<dbReference type="Gene3D" id="6.20.50.20">
    <property type="match status" value="1"/>
</dbReference>
<dbReference type="InterPro" id="IPR007175">
    <property type="entry name" value="Rpr2/Snm1/Rpp21"/>
</dbReference>
<dbReference type="PANTHER" id="PTHR14742:SF0">
    <property type="entry name" value="RIBONUCLEASE P PROTEIN SUBUNIT P21"/>
    <property type="match status" value="1"/>
</dbReference>
<dbReference type="PANTHER" id="PTHR14742">
    <property type="entry name" value="RIBONUCLEASE P SUBUNIT P21"/>
    <property type="match status" value="1"/>
</dbReference>
<dbReference type="Pfam" id="PF04032">
    <property type="entry name" value="Rpr2"/>
    <property type="match status" value="1"/>
</dbReference>
<reference key="1">
    <citation type="journal article" date="2004" name="Mol. Biol. Evol.">
        <title>Rhesus macaque class I duplicon structures, organization, and evolution within the alpha block of the major histocompatibility complex.</title>
        <authorList>
            <person name="Kulski J.K."/>
            <person name="Anzai T."/>
            <person name="Shiina T."/>
            <person name="Inoko H."/>
        </authorList>
    </citation>
    <scope>NUCLEOTIDE SEQUENCE [LARGE SCALE GENOMIC DNA]</scope>
</reference>
<gene>
    <name type="primary">RPP21</name>
</gene>
<name>RPP21_MACMU</name>
<evidence type="ECO:0000250" key="1"/>
<evidence type="ECO:0000250" key="2">
    <source>
        <dbReference type="UniProtKB" id="Q9H633"/>
    </source>
</evidence>
<evidence type="ECO:0000256" key="3">
    <source>
        <dbReference type="SAM" id="MobiDB-lite"/>
    </source>
</evidence>
<evidence type="ECO:0000305" key="4"/>
<comment type="function">
    <text evidence="2">Component of ribonuclease P, a ribonucleoprotein complex that generates mature tRNA molecules by cleaving their 5'-ends.</text>
</comment>
<comment type="subunit">
    <text evidence="2">RNase P consists of a catalytic RNA moiety and about 10 protein subunits; POP1, POP4, POP5, POP7, RPP14, RPP21, RPP25, RPP30, RPP38 and RPP40. Within the RNase P complex, POP1, POP7 and RPP25 form the 'finger' subcomplex, POP5, RPP14, RPP40 and homodimeric RPP30 form the 'palm' subcomplex, and RPP21, POP4 and RPP38 form the 'wrist' subcomplex. All subunits of the RNase P complex interact with the catalytic RNA.</text>
</comment>
<comment type="subcellular location">
    <subcellularLocation>
        <location evidence="2">Nucleus</location>
        <location evidence="2">Nucleolus</location>
    </subcellularLocation>
</comment>
<comment type="similarity">
    <text evidence="4">Belongs to the eukaryotic/archaeal RNase P protein component 4 family.</text>
</comment>
<protein>
    <recommendedName>
        <fullName>Ribonuclease P protein subunit p21</fullName>
        <shortName>RNaseP protein p21</shortName>
    </recommendedName>
</protein>
<accession>Q5TM57</accession>
<sequence length="154" mass="17565">MAGPVKDREAFQRLNFLYQAAHCVLAQDPENQALARFYCHTERTIAKRLVLRRDPSVKRTLCRGCSSLLVPGLTCTQRQRRCRGQRWTVQTCLTCQRSQRFLNDPGHLLWGDRPEAQLGNQADSKPLQPLPNTAHSISDHLPEEKMQIQGSSDQ</sequence>